<comment type="function">
    <text evidence="1">Catalyzes the methylthiolation of an aspartic acid residue of ribosomal protein uS12.</text>
</comment>
<comment type="catalytic activity">
    <reaction evidence="1">
        <text>L-aspartate(89)-[ribosomal protein uS12]-hydrogen + (sulfur carrier)-SH + AH2 + 2 S-adenosyl-L-methionine = 3-methylsulfanyl-L-aspartate(89)-[ribosomal protein uS12]-hydrogen + (sulfur carrier)-H + 5'-deoxyadenosine + L-methionine + A + S-adenosyl-L-homocysteine + 2 H(+)</text>
        <dbReference type="Rhea" id="RHEA:37087"/>
        <dbReference type="Rhea" id="RHEA-COMP:10460"/>
        <dbReference type="Rhea" id="RHEA-COMP:10461"/>
        <dbReference type="Rhea" id="RHEA-COMP:14737"/>
        <dbReference type="Rhea" id="RHEA-COMP:14739"/>
        <dbReference type="ChEBI" id="CHEBI:13193"/>
        <dbReference type="ChEBI" id="CHEBI:15378"/>
        <dbReference type="ChEBI" id="CHEBI:17319"/>
        <dbReference type="ChEBI" id="CHEBI:17499"/>
        <dbReference type="ChEBI" id="CHEBI:29917"/>
        <dbReference type="ChEBI" id="CHEBI:29961"/>
        <dbReference type="ChEBI" id="CHEBI:57844"/>
        <dbReference type="ChEBI" id="CHEBI:57856"/>
        <dbReference type="ChEBI" id="CHEBI:59789"/>
        <dbReference type="ChEBI" id="CHEBI:64428"/>
        <dbReference type="ChEBI" id="CHEBI:73599"/>
        <dbReference type="EC" id="2.8.4.4"/>
    </reaction>
</comment>
<comment type="cofactor">
    <cofactor evidence="1">
        <name>[4Fe-4S] cluster</name>
        <dbReference type="ChEBI" id="CHEBI:49883"/>
    </cofactor>
    <text evidence="1">Binds 2 [4Fe-4S] clusters. One cluster is coordinated with 3 cysteines and an exchangeable S-adenosyl-L-methionine.</text>
</comment>
<comment type="subcellular location">
    <subcellularLocation>
        <location evidence="1">Cytoplasm</location>
    </subcellularLocation>
</comment>
<comment type="similarity">
    <text evidence="1">Belongs to the methylthiotransferase family. RimO subfamily.</text>
</comment>
<proteinExistence type="inferred from homology"/>
<feature type="chain" id="PRO_0000375016" description="Ribosomal protein uS12 methylthiotransferase RimO">
    <location>
        <begin position="1"/>
        <end position="465"/>
    </location>
</feature>
<feature type="domain" description="MTTase N-terminal" evidence="1">
    <location>
        <begin position="1"/>
        <end position="117"/>
    </location>
</feature>
<feature type="domain" description="Radical SAM core" evidence="2">
    <location>
        <begin position="136"/>
        <end position="369"/>
    </location>
</feature>
<feature type="domain" description="TRAM" evidence="1">
    <location>
        <begin position="371"/>
        <end position="442"/>
    </location>
</feature>
<feature type="binding site" evidence="1">
    <location>
        <position position="10"/>
    </location>
    <ligand>
        <name>[4Fe-4S] cluster</name>
        <dbReference type="ChEBI" id="CHEBI:49883"/>
        <label>1</label>
    </ligand>
</feature>
<feature type="binding site" evidence="1">
    <location>
        <position position="46"/>
    </location>
    <ligand>
        <name>[4Fe-4S] cluster</name>
        <dbReference type="ChEBI" id="CHEBI:49883"/>
        <label>1</label>
    </ligand>
</feature>
<feature type="binding site" evidence="1">
    <location>
        <position position="80"/>
    </location>
    <ligand>
        <name>[4Fe-4S] cluster</name>
        <dbReference type="ChEBI" id="CHEBI:49883"/>
        <label>1</label>
    </ligand>
</feature>
<feature type="binding site" evidence="1">
    <location>
        <position position="150"/>
    </location>
    <ligand>
        <name>[4Fe-4S] cluster</name>
        <dbReference type="ChEBI" id="CHEBI:49883"/>
        <label>2</label>
        <note>4Fe-4S-S-AdoMet</note>
    </ligand>
</feature>
<feature type="binding site" evidence="1">
    <location>
        <position position="154"/>
    </location>
    <ligand>
        <name>[4Fe-4S] cluster</name>
        <dbReference type="ChEBI" id="CHEBI:49883"/>
        <label>2</label>
        <note>4Fe-4S-S-AdoMet</note>
    </ligand>
</feature>
<feature type="binding site" evidence="1">
    <location>
        <position position="157"/>
    </location>
    <ligand>
        <name>[4Fe-4S] cluster</name>
        <dbReference type="ChEBI" id="CHEBI:49883"/>
        <label>2</label>
        <note>4Fe-4S-S-AdoMet</note>
    </ligand>
</feature>
<protein>
    <recommendedName>
        <fullName evidence="1">Ribosomal protein uS12 methylthiotransferase RimO</fullName>
        <shortName evidence="1">uS12 MTTase</shortName>
        <shortName evidence="1">uS12 methylthiotransferase</shortName>
        <ecNumber evidence="1">2.8.4.4</ecNumber>
    </recommendedName>
    <alternativeName>
        <fullName evidence="1">Ribosomal protein uS12 (aspartate-C(3))-methylthiotransferase</fullName>
    </alternativeName>
    <alternativeName>
        <fullName evidence="1">Ribosome maturation factor RimO</fullName>
    </alternativeName>
</protein>
<sequence>MKVGFISLGCPKNLVDSEVMMGQLVAKGHELTSHPDQADVLVVNTCSFIDPAKKESVDTILEMAEYKKIGRAKKLIVAGCLVERYRGDIRTEMPEVDALIGTNELDSIVDICEGMPPSTNPLEPYLYHDLTPRVLATPRHFAYMKIAEGCDHPCTFCVIPQYRGAFRSRRFESVVSEATRLFQQGIREINLIGQDTTCYGEDLGLKDGLAELLARLAQIETPQEKWIRFLYAYPNKVTQKLLDTLAEHAALAKYIDMPLQHASANVLKRMKRGASGDIFLKLIERIRRTIPGVAIRTSFIVGFPGETAADFDELCAFVEAAKFDNLGVFTYSDEDTSASYALDGKVDGRTIQNRKRRLMAIQRKIARARNRGLVGKEVPVLVSGVSGETDLLWEARMSTQAPEIDGVTLINDFEGSEPRAGEIRRLRITEAHDYDVVGTLLAPTEPAPVLPAGPGLINIESLVAV</sequence>
<dbReference type="EC" id="2.8.4.4" evidence="1"/>
<dbReference type="EMBL" id="CP000473">
    <property type="protein sequence ID" value="ABJ82562.1"/>
    <property type="molecule type" value="Genomic_DNA"/>
</dbReference>
<dbReference type="SMR" id="Q028J0"/>
<dbReference type="FunCoup" id="Q028J0">
    <property type="interactions" value="370"/>
</dbReference>
<dbReference type="STRING" id="234267.Acid_1571"/>
<dbReference type="KEGG" id="sus:Acid_1571"/>
<dbReference type="eggNOG" id="COG0621">
    <property type="taxonomic scope" value="Bacteria"/>
</dbReference>
<dbReference type="HOGENOM" id="CLU_018697_0_1_0"/>
<dbReference type="InParanoid" id="Q028J0"/>
<dbReference type="OrthoDB" id="9805215at2"/>
<dbReference type="GO" id="GO:0005829">
    <property type="term" value="C:cytosol"/>
    <property type="evidence" value="ECO:0007669"/>
    <property type="project" value="TreeGrafter"/>
</dbReference>
<dbReference type="GO" id="GO:0051539">
    <property type="term" value="F:4 iron, 4 sulfur cluster binding"/>
    <property type="evidence" value="ECO:0007669"/>
    <property type="project" value="UniProtKB-UniRule"/>
</dbReference>
<dbReference type="GO" id="GO:0035599">
    <property type="term" value="F:aspartic acid methylthiotransferase activity"/>
    <property type="evidence" value="ECO:0007669"/>
    <property type="project" value="TreeGrafter"/>
</dbReference>
<dbReference type="GO" id="GO:0046872">
    <property type="term" value="F:metal ion binding"/>
    <property type="evidence" value="ECO:0007669"/>
    <property type="project" value="UniProtKB-KW"/>
</dbReference>
<dbReference type="GO" id="GO:0103039">
    <property type="term" value="F:protein methylthiotransferase activity"/>
    <property type="evidence" value="ECO:0007669"/>
    <property type="project" value="UniProtKB-EC"/>
</dbReference>
<dbReference type="GO" id="GO:0006400">
    <property type="term" value="P:tRNA modification"/>
    <property type="evidence" value="ECO:0007669"/>
    <property type="project" value="InterPro"/>
</dbReference>
<dbReference type="CDD" id="cd01335">
    <property type="entry name" value="Radical_SAM"/>
    <property type="match status" value="1"/>
</dbReference>
<dbReference type="FunFam" id="3.80.30.20:FF:000001">
    <property type="entry name" value="tRNA-2-methylthio-N(6)-dimethylallyladenosine synthase 2"/>
    <property type="match status" value="1"/>
</dbReference>
<dbReference type="Gene3D" id="3.40.50.12160">
    <property type="entry name" value="Methylthiotransferase, N-terminal domain"/>
    <property type="match status" value="1"/>
</dbReference>
<dbReference type="Gene3D" id="2.40.50.140">
    <property type="entry name" value="Nucleic acid-binding proteins"/>
    <property type="match status" value="1"/>
</dbReference>
<dbReference type="Gene3D" id="3.80.30.20">
    <property type="entry name" value="tm_1862 like domain"/>
    <property type="match status" value="1"/>
</dbReference>
<dbReference type="HAMAP" id="MF_01865">
    <property type="entry name" value="MTTase_RimO"/>
    <property type="match status" value="1"/>
</dbReference>
<dbReference type="InterPro" id="IPR006638">
    <property type="entry name" value="Elp3/MiaA/NifB-like_rSAM"/>
</dbReference>
<dbReference type="InterPro" id="IPR005839">
    <property type="entry name" value="Methylthiotransferase"/>
</dbReference>
<dbReference type="InterPro" id="IPR020612">
    <property type="entry name" value="Methylthiotransferase_CS"/>
</dbReference>
<dbReference type="InterPro" id="IPR013848">
    <property type="entry name" value="Methylthiotransferase_N"/>
</dbReference>
<dbReference type="InterPro" id="IPR038135">
    <property type="entry name" value="Methylthiotransferase_N_sf"/>
</dbReference>
<dbReference type="InterPro" id="IPR012340">
    <property type="entry name" value="NA-bd_OB-fold"/>
</dbReference>
<dbReference type="InterPro" id="IPR005840">
    <property type="entry name" value="Ribosomal_uS12_MeSTrfase_RimO"/>
</dbReference>
<dbReference type="InterPro" id="IPR007197">
    <property type="entry name" value="rSAM"/>
</dbReference>
<dbReference type="InterPro" id="IPR023404">
    <property type="entry name" value="rSAM_horseshoe"/>
</dbReference>
<dbReference type="InterPro" id="IPR002792">
    <property type="entry name" value="TRAM_dom"/>
</dbReference>
<dbReference type="NCBIfam" id="TIGR01125">
    <property type="entry name" value="30S ribosomal protein S12 methylthiotransferase RimO"/>
    <property type="match status" value="1"/>
</dbReference>
<dbReference type="NCBIfam" id="TIGR00089">
    <property type="entry name" value="MiaB/RimO family radical SAM methylthiotransferase"/>
    <property type="match status" value="1"/>
</dbReference>
<dbReference type="PANTHER" id="PTHR43837">
    <property type="entry name" value="RIBOSOMAL PROTEIN S12 METHYLTHIOTRANSFERASE RIMO"/>
    <property type="match status" value="1"/>
</dbReference>
<dbReference type="PANTHER" id="PTHR43837:SF1">
    <property type="entry name" value="RIBOSOMAL PROTEIN US12 METHYLTHIOTRANSFERASE RIMO"/>
    <property type="match status" value="1"/>
</dbReference>
<dbReference type="Pfam" id="PF04055">
    <property type="entry name" value="Radical_SAM"/>
    <property type="match status" value="1"/>
</dbReference>
<dbReference type="Pfam" id="PF18693">
    <property type="entry name" value="TRAM_2"/>
    <property type="match status" value="1"/>
</dbReference>
<dbReference type="Pfam" id="PF00919">
    <property type="entry name" value="UPF0004"/>
    <property type="match status" value="1"/>
</dbReference>
<dbReference type="SFLD" id="SFLDG01082">
    <property type="entry name" value="B12-binding_domain_containing"/>
    <property type="match status" value="1"/>
</dbReference>
<dbReference type="SFLD" id="SFLDS00029">
    <property type="entry name" value="Radical_SAM"/>
    <property type="match status" value="1"/>
</dbReference>
<dbReference type="SFLD" id="SFLDF00274">
    <property type="entry name" value="ribosomal_protein_S12_methylth"/>
    <property type="match status" value="1"/>
</dbReference>
<dbReference type="SMART" id="SM00729">
    <property type="entry name" value="Elp3"/>
    <property type="match status" value="1"/>
</dbReference>
<dbReference type="SUPFAM" id="SSF102114">
    <property type="entry name" value="Radical SAM enzymes"/>
    <property type="match status" value="1"/>
</dbReference>
<dbReference type="PROSITE" id="PS51449">
    <property type="entry name" value="MTTASE_N"/>
    <property type="match status" value="1"/>
</dbReference>
<dbReference type="PROSITE" id="PS01278">
    <property type="entry name" value="MTTASE_RADICAL"/>
    <property type="match status" value="1"/>
</dbReference>
<dbReference type="PROSITE" id="PS51918">
    <property type="entry name" value="RADICAL_SAM"/>
    <property type="match status" value="1"/>
</dbReference>
<name>RIMO_SOLUE</name>
<evidence type="ECO:0000255" key="1">
    <source>
        <dbReference type="HAMAP-Rule" id="MF_01865"/>
    </source>
</evidence>
<evidence type="ECO:0000255" key="2">
    <source>
        <dbReference type="PROSITE-ProRule" id="PRU01266"/>
    </source>
</evidence>
<keyword id="KW-0004">4Fe-4S</keyword>
<keyword id="KW-0963">Cytoplasm</keyword>
<keyword id="KW-0408">Iron</keyword>
<keyword id="KW-0411">Iron-sulfur</keyword>
<keyword id="KW-0479">Metal-binding</keyword>
<keyword id="KW-0949">S-adenosyl-L-methionine</keyword>
<keyword id="KW-0808">Transferase</keyword>
<reference key="1">
    <citation type="journal article" date="2009" name="Appl. Environ. Microbiol.">
        <title>Three genomes from the phylum Acidobacteria provide insight into the lifestyles of these microorganisms in soils.</title>
        <authorList>
            <person name="Ward N.L."/>
            <person name="Challacombe J.F."/>
            <person name="Janssen P.H."/>
            <person name="Henrissat B."/>
            <person name="Coutinho P.M."/>
            <person name="Wu M."/>
            <person name="Xie G."/>
            <person name="Haft D.H."/>
            <person name="Sait M."/>
            <person name="Badger J."/>
            <person name="Barabote R.D."/>
            <person name="Bradley B."/>
            <person name="Brettin T.S."/>
            <person name="Brinkac L.M."/>
            <person name="Bruce D."/>
            <person name="Creasy T."/>
            <person name="Daugherty S.C."/>
            <person name="Davidsen T.M."/>
            <person name="DeBoy R.T."/>
            <person name="Detter J.C."/>
            <person name="Dodson R.J."/>
            <person name="Durkin A.S."/>
            <person name="Ganapathy A."/>
            <person name="Gwinn-Giglio M."/>
            <person name="Han C.S."/>
            <person name="Khouri H."/>
            <person name="Kiss H."/>
            <person name="Kothari S.P."/>
            <person name="Madupu R."/>
            <person name="Nelson K.E."/>
            <person name="Nelson W.C."/>
            <person name="Paulsen I."/>
            <person name="Penn K."/>
            <person name="Ren Q."/>
            <person name="Rosovitz M.J."/>
            <person name="Selengut J.D."/>
            <person name="Shrivastava S."/>
            <person name="Sullivan S.A."/>
            <person name="Tapia R."/>
            <person name="Thompson L.S."/>
            <person name="Watkins K.L."/>
            <person name="Yang Q."/>
            <person name="Yu C."/>
            <person name="Zafar N."/>
            <person name="Zhou L."/>
            <person name="Kuske C.R."/>
        </authorList>
    </citation>
    <scope>NUCLEOTIDE SEQUENCE [LARGE SCALE GENOMIC DNA]</scope>
    <source>
        <strain>Ellin6076</strain>
    </source>
</reference>
<accession>Q028J0</accession>
<organism>
    <name type="scientific">Solibacter usitatus (strain Ellin6076)</name>
    <dbReference type="NCBI Taxonomy" id="234267"/>
    <lineage>
        <taxon>Bacteria</taxon>
        <taxon>Pseudomonadati</taxon>
        <taxon>Acidobacteriota</taxon>
        <taxon>Terriglobia</taxon>
        <taxon>Bryobacterales</taxon>
        <taxon>Solibacteraceae</taxon>
        <taxon>Candidatus Solibacter</taxon>
    </lineage>
</organism>
<gene>
    <name evidence="1" type="primary">rimO</name>
    <name type="ordered locus">Acid_1571</name>
</gene>